<comment type="function">
    <text evidence="1">Can catalyze the hydrolysis of ATP in the presence of single-stranded DNA, the ATP-dependent uptake of single-stranded DNA by duplex DNA, and the ATP-dependent hybridization of homologous single-stranded DNAs. It interacts with LexA causing its activation and leading to its autocatalytic cleavage.</text>
</comment>
<comment type="subcellular location">
    <subcellularLocation>
        <location evidence="1">Cytoplasm</location>
    </subcellularLocation>
</comment>
<comment type="similarity">
    <text evidence="1">Belongs to the RecA family.</text>
</comment>
<comment type="sequence caution" evidence="2">
    <conflict type="erroneous initiation">
        <sequence resource="EMBL-CDS" id="BAA78779"/>
    </conflict>
</comment>
<comment type="sequence caution" evidence="2">
    <conflict type="erroneous initiation">
        <sequence resource="EMBL-CDS" id="CAE29292"/>
    </conflict>
</comment>
<reference key="1">
    <citation type="journal article" date="1999" name="Microbiology">
        <title>Molecular analysis of the recA gene and SOS box of the purple non-sulfur bacterium Rhodopseudomonas palustris no. 7.</title>
        <authorList>
            <person name="Dumay V."/>
            <person name="Inui M."/>
            <person name="Yukawa H."/>
        </authorList>
    </citation>
    <scope>NUCLEOTIDE SEQUENCE [GENOMIC DNA]</scope>
    <source>
        <strain>7</strain>
    </source>
</reference>
<reference key="2">
    <citation type="journal article" date="2004" name="Nat. Biotechnol.">
        <title>Complete genome sequence of the metabolically versatile photosynthetic bacterium Rhodopseudomonas palustris.</title>
        <authorList>
            <person name="Larimer F.W."/>
            <person name="Chain P."/>
            <person name="Hauser L."/>
            <person name="Lamerdin J.E."/>
            <person name="Malfatti S."/>
            <person name="Do L."/>
            <person name="Land M.L."/>
            <person name="Pelletier D.A."/>
            <person name="Beatty J.T."/>
            <person name="Lang A.S."/>
            <person name="Tabita F.R."/>
            <person name="Gibson J.L."/>
            <person name="Hanson T.E."/>
            <person name="Bobst C."/>
            <person name="Torres y Torres J.L."/>
            <person name="Peres C."/>
            <person name="Harrison F.H."/>
            <person name="Gibson J."/>
            <person name="Harwood C.S."/>
        </authorList>
    </citation>
    <scope>NUCLEOTIDE SEQUENCE [LARGE SCALE GENOMIC DNA]</scope>
    <source>
        <strain>ATCC BAA-98 / CGA009</strain>
    </source>
</reference>
<evidence type="ECO:0000255" key="1">
    <source>
        <dbReference type="HAMAP-Rule" id="MF_00268"/>
    </source>
</evidence>
<evidence type="ECO:0000305" key="2"/>
<accession>Q9XBC1</accession>
<gene>
    <name evidence="1" type="primary">recA</name>
    <name type="ordered locus">RPA3851</name>
</gene>
<protein>
    <recommendedName>
        <fullName evidence="1">Protein RecA</fullName>
    </recommendedName>
    <alternativeName>
        <fullName evidence="1">Recombinase A</fullName>
    </alternativeName>
</protein>
<sequence length="349" mass="37403">MDKSKALSAALSQIERQFGKGSVMRLGKNDRSMDIETISSGSLGLDIALGVGGLPKGRIVEIYGPESSGKTTLALHCVAEAQKKGGICAFVDAEHALDPVYARKLGVNVDDLLISQPDHGEQALEIADTLVRSGAIDVLIVDSVAALVPRAELEGEMGDALPGLQARLMSQALRKLTASINKSNTMVIFINQIRMKIGVMYGSPETTTGGNALKFYASVRLDIRRIGQIKERDEVVGNQTRVKVVKNKLAPPFKQVEFDIMYGEGVSKMGEILDLGVKAGIVEKSGAWFSHDSQRLGQGRENAKAFLKANPDMTAKIEAAIRQNSGLIAEQILAGSPESDADGEEPMEE</sequence>
<name>RECA_RHOPA</name>
<feature type="chain" id="PRO_0000122818" description="Protein RecA">
    <location>
        <begin position="1"/>
        <end position="349"/>
    </location>
</feature>
<feature type="binding site" evidence="1">
    <location>
        <begin position="64"/>
        <end position="71"/>
    </location>
    <ligand>
        <name>ATP</name>
        <dbReference type="ChEBI" id="CHEBI:30616"/>
    </ligand>
</feature>
<feature type="sequence conflict" description="In Ref. 1; BAA78779." evidence="2" ref="1">
    <original>R</original>
    <variation>K</variation>
    <location>
        <position position="25"/>
    </location>
</feature>
<feature type="sequence conflict" description="In Ref. 1; BAA78779." evidence="2" ref="1">
    <original>SMD</original>
    <variation>AME</variation>
    <location>
        <begin position="32"/>
        <end position="34"/>
    </location>
</feature>
<feature type="sequence conflict" description="In Ref. 1; BAA78779." evidence="2" ref="1">
    <original>V</original>
    <variation>I</variation>
    <location>
        <position position="91"/>
    </location>
</feature>
<feature type="sequence conflict" description="In Ref. 1; BAA78779." evidence="2" ref="1">
    <original>Q</original>
    <variation>A</variation>
    <location>
        <position position="228"/>
    </location>
</feature>
<feature type="sequence conflict" description="In Ref. 1; BAA78779." evidence="2" ref="1">
    <original>V</original>
    <variation>I</variation>
    <location>
        <position position="236"/>
    </location>
</feature>
<feature type="sequence conflict" description="In Ref. 1; BAA78779." evidence="2" ref="1">
    <original>H</original>
    <variation>Y</variation>
    <location>
        <position position="291"/>
    </location>
</feature>
<feature type="sequence conflict" description="In Ref. 1; BAA78779." evidence="2" ref="1">
    <original>A</original>
    <variation>S</variation>
    <location>
        <position position="305"/>
    </location>
</feature>
<feature type="sequence conflict" description="In Ref. 1; BAA78779." evidence="2" ref="1">
    <original>KA</original>
    <variation>RS</variation>
    <location>
        <begin position="308"/>
        <end position="309"/>
    </location>
</feature>
<feature type="sequence conflict" description="In Ref. 1; BAA78779." evidence="2" ref="1">
    <original>S</original>
    <variation>R</variation>
    <location>
        <position position="339"/>
    </location>
</feature>
<feature type="sequence conflict" description="In Ref. 1; BAA78779." evidence="2" ref="1">
    <original>M</original>
    <variation>I</variation>
    <location>
        <position position="347"/>
    </location>
</feature>
<dbReference type="EMBL" id="D84467">
    <property type="protein sequence ID" value="BAA78779.1"/>
    <property type="status" value="ALT_INIT"/>
    <property type="molecule type" value="Genomic_DNA"/>
</dbReference>
<dbReference type="EMBL" id="BX572605">
    <property type="protein sequence ID" value="CAE29292.1"/>
    <property type="status" value="ALT_INIT"/>
    <property type="molecule type" value="Genomic_DNA"/>
</dbReference>
<dbReference type="RefSeq" id="WP_011159387.1">
    <property type="nucleotide sequence ID" value="NZ_CP116810.1"/>
</dbReference>
<dbReference type="SMR" id="Q9XBC1"/>
<dbReference type="STRING" id="258594.RPA3851"/>
<dbReference type="GeneID" id="66894960"/>
<dbReference type="eggNOG" id="COG0468">
    <property type="taxonomic scope" value="Bacteria"/>
</dbReference>
<dbReference type="HOGENOM" id="CLU_040469_1_2_5"/>
<dbReference type="PhylomeDB" id="Q9XBC1"/>
<dbReference type="GO" id="GO:0005829">
    <property type="term" value="C:cytosol"/>
    <property type="evidence" value="ECO:0007669"/>
    <property type="project" value="TreeGrafter"/>
</dbReference>
<dbReference type="GO" id="GO:0005524">
    <property type="term" value="F:ATP binding"/>
    <property type="evidence" value="ECO:0007669"/>
    <property type="project" value="UniProtKB-UniRule"/>
</dbReference>
<dbReference type="GO" id="GO:0016887">
    <property type="term" value="F:ATP hydrolysis activity"/>
    <property type="evidence" value="ECO:0007669"/>
    <property type="project" value="InterPro"/>
</dbReference>
<dbReference type="GO" id="GO:0140664">
    <property type="term" value="F:ATP-dependent DNA damage sensor activity"/>
    <property type="evidence" value="ECO:0007669"/>
    <property type="project" value="InterPro"/>
</dbReference>
<dbReference type="GO" id="GO:0003684">
    <property type="term" value="F:damaged DNA binding"/>
    <property type="evidence" value="ECO:0007669"/>
    <property type="project" value="UniProtKB-UniRule"/>
</dbReference>
<dbReference type="GO" id="GO:0003697">
    <property type="term" value="F:single-stranded DNA binding"/>
    <property type="evidence" value="ECO:0007669"/>
    <property type="project" value="UniProtKB-UniRule"/>
</dbReference>
<dbReference type="GO" id="GO:0006310">
    <property type="term" value="P:DNA recombination"/>
    <property type="evidence" value="ECO:0007669"/>
    <property type="project" value="UniProtKB-UniRule"/>
</dbReference>
<dbReference type="GO" id="GO:0006281">
    <property type="term" value="P:DNA repair"/>
    <property type="evidence" value="ECO:0007669"/>
    <property type="project" value="UniProtKB-UniRule"/>
</dbReference>
<dbReference type="GO" id="GO:0009432">
    <property type="term" value="P:SOS response"/>
    <property type="evidence" value="ECO:0007669"/>
    <property type="project" value="UniProtKB-UniRule"/>
</dbReference>
<dbReference type="CDD" id="cd00983">
    <property type="entry name" value="RecA"/>
    <property type="match status" value="1"/>
</dbReference>
<dbReference type="FunFam" id="3.40.50.300:FF:000087">
    <property type="entry name" value="Recombinase RecA"/>
    <property type="match status" value="1"/>
</dbReference>
<dbReference type="Gene3D" id="3.40.50.300">
    <property type="entry name" value="P-loop containing nucleotide triphosphate hydrolases"/>
    <property type="match status" value="1"/>
</dbReference>
<dbReference type="HAMAP" id="MF_00268">
    <property type="entry name" value="RecA"/>
    <property type="match status" value="1"/>
</dbReference>
<dbReference type="InterPro" id="IPR003593">
    <property type="entry name" value="AAA+_ATPase"/>
</dbReference>
<dbReference type="InterPro" id="IPR013765">
    <property type="entry name" value="DNA_recomb/repair_RecA"/>
</dbReference>
<dbReference type="InterPro" id="IPR020584">
    <property type="entry name" value="DNA_recomb/repair_RecA_CS"/>
</dbReference>
<dbReference type="InterPro" id="IPR027417">
    <property type="entry name" value="P-loop_NTPase"/>
</dbReference>
<dbReference type="InterPro" id="IPR049261">
    <property type="entry name" value="RecA-like_C"/>
</dbReference>
<dbReference type="InterPro" id="IPR049428">
    <property type="entry name" value="RecA-like_N"/>
</dbReference>
<dbReference type="InterPro" id="IPR020588">
    <property type="entry name" value="RecA_ATP-bd"/>
</dbReference>
<dbReference type="InterPro" id="IPR023400">
    <property type="entry name" value="RecA_C_sf"/>
</dbReference>
<dbReference type="InterPro" id="IPR020587">
    <property type="entry name" value="RecA_monomer-monomer_interface"/>
</dbReference>
<dbReference type="NCBIfam" id="TIGR02012">
    <property type="entry name" value="tigrfam_recA"/>
    <property type="match status" value="1"/>
</dbReference>
<dbReference type="PANTHER" id="PTHR45900:SF1">
    <property type="entry name" value="MITOCHONDRIAL DNA REPAIR PROTEIN RECA HOMOLOG-RELATED"/>
    <property type="match status" value="1"/>
</dbReference>
<dbReference type="PANTHER" id="PTHR45900">
    <property type="entry name" value="RECA"/>
    <property type="match status" value="1"/>
</dbReference>
<dbReference type="Pfam" id="PF00154">
    <property type="entry name" value="RecA"/>
    <property type="match status" value="1"/>
</dbReference>
<dbReference type="Pfam" id="PF21096">
    <property type="entry name" value="RecA_C"/>
    <property type="match status" value="1"/>
</dbReference>
<dbReference type="PRINTS" id="PR00142">
    <property type="entry name" value="RECA"/>
</dbReference>
<dbReference type="SMART" id="SM00382">
    <property type="entry name" value="AAA"/>
    <property type="match status" value="1"/>
</dbReference>
<dbReference type="SUPFAM" id="SSF52540">
    <property type="entry name" value="P-loop containing nucleoside triphosphate hydrolases"/>
    <property type="match status" value="1"/>
</dbReference>
<dbReference type="SUPFAM" id="SSF54752">
    <property type="entry name" value="RecA protein, C-terminal domain"/>
    <property type="match status" value="1"/>
</dbReference>
<dbReference type="PROSITE" id="PS00321">
    <property type="entry name" value="RECA_1"/>
    <property type="match status" value="1"/>
</dbReference>
<dbReference type="PROSITE" id="PS50162">
    <property type="entry name" value="RECA_2"/>
    <property type="match status" value="1"/>
</dbReference>
<dbReference type="PROSITE" id="PS50163">
    <property type="entry name" value="RECA_3"/>
    <property type="match status" value="1"/>
</dbReference>
<proteinExistence type="inferred from homology"/>
<organism>
    <name type="scientific">Rhodopseudomonas palustris (strain ATCC BAA-98 / CGA009)</name>
    <dbReference type="NCBI Taxonomy" id="258594"/>
    <lineage>
        <taxon>Bacteria</taxon>
        <taxon>Pseudomonadati</taxon>
        <taxon>Pseudomonadota</taxon>
        <taxon>Alphaproteobacteria</taxon>
        <taxon>Hyphomicrobiales</taxon>
        <taxon>Nitrobacteraceae</taxon>
        <taxon>Rhodopseudomonas</taxon>
    </lineage>
</organism>
<keyword id="KW-0067">ATP-binding</keyword>
<keyword id="KW-0963">Cytoplasm</keyword>
<keyword id="KW-0227">DNA damage</keyword>
<keyword id="KW-0233">DNA recombination</keyword>
<keyword id="KW-0234">DNA repair</keyword>
<keyword id="KW-0238">DNA-binding</keyword>
<keyword id="KW-0547">Nucleotide-binding</keyword>
<keyword id="KW-0742">SOS response</keyword>